<proteinExistence type="inferred from homology"/>
<evidence type="ECO:0000250" key="1"/>
<evidence type="ECO:0000250" key="2">
    <source>
        <dbReference type="UniProtKB" id="P00900"/>
    </source>
</evidence>
<feature type="chain" id="PRO_0000056862" description="Multifunctional tryptophan biosynthesis protein">
    <location>
        <begin position="1"/>
        <end position="752"/>
    </location>
</feature>
<feature type="domain" description="Glutamine amidotransferase type-1">
    <location>
        <begin position="23"/>
        <end position="223"/>
    </location>
</feature>
<feature type="region of interest" description="Indole-3-glycerol phosphate synthase">
    <location>
        <begin position="239"/>
        <end position="503"/>
    </location>
</feature>
<feature type="region of interest" description="N-(5'-phosphoribosyl)anthranilate isomerase">
    <location>
        <begin position="519"/>
        <end position="752"/>
    </location>
</feature>
<feature type="active site" description="Nucleophile; for GATase activity" evidence="2">
    <location>
        <position position="102"/>
    </location>
</feature>
<feature type="active site" description="For GATase activity" evidence="1">
    <location>
        <position position="197"/>
    </location>
</feature>
<feature type="active site" description="For GATase activity" evidence="1">
    <location>
        <position position="199"/>
    </location>
</feature>
<feature type="binding site" evidence="2">
    <location>
        <begin position="74"/>
        <end position="76"/>
    </location>
    <ligand>
        <name>L-glutamine</name>
        <dbReference type="ChEBI" id="CHEBI:58359"/>
    </ligand>
</feature>
<feature type="binding site" evidence="2">
    <location>
        <position position="106"/>
    </location>
    <ligand>
        <name>L-glutamine</name>
        <dbReference type="ChEBI" id="CHEBI:58359"/>
    </ligand>
</feature>
<feature type="binding site" evidence="2">
    <location>
        <begin position="152"/>
        <end position="153"/>
    </location>
    <ligand>
        <name>L-glutamine</name>
        <dbReference type="ChEBI" id="CHEBI:58359"/>
    </ligand>
</feature>
<sequence length="752" mass="81035">MADLVDHSPHHATKAAKLASASNVILIDNYDSFTWNIYQYLVLEGATVTVYRNDEVTVEDLVAKKPTQLVISPGPGHPDTDAGISNAVIKHFSGKVPIFGVCMGQQCMITSFGGKVDVTGEILHGKTSELKHDSKGVYQGLPTSLEVTRYHSLAGTHSTIPDCLEVTSRVELGDASGKNIIMGVRHKEFAVEGVQFHPESILTQYGRKMFRNFLELTAGTWDNKQGAAVAAPADKKLSILDKIYAHRKNAVDEQKKIPALRPEALQAAYDLNIAPPQLSFPDRLRQSDYPLSLMAEIKRASPSKGIISANVCAPAQAREYAKAGASVISVLTEPEWFKGTIDDLRAVRQSLEGLPNRPAVLRKEFVFEEYQILEARLAGADTVLLIVKMLDIELLTRLYHYSRSLGMEPLVEVNTPEEMKIAVDLGSEVIGVNNRDLTSFEVDLGTTSRLMDQVPESTIVCALSGISGPQDVEAYKKEGVKAILVGEALMRAPDTSAFVAQLLGGSNQNFAGASPSSPLVKICGTRTEEGALAAIQAGADLIGIIMVQGRSRLVPDDVALGISRVVKSTPRPADTLQQPSSATSLEWFDHSTNILRHPSRALLVGVFMNQPLSYVVSQQQKLGLDVVQLHGSEPLEWSSLIPVPVIRKFAPGDIGIARRAYHTLPLLDSGAGGSGELLEESGVKKVLDSDEGLRVILAGGLNPDNVAGTVKKLGQSGQKVVGLDVSSGVETNGAQDLEKIRAFVKSAKSIRQ</sequence>
<name>TRPG_PENCH</name>
<protein>
    <recommendedName>
        <fullName>Multifunctional tryptophan biosynthesis protein</fullName>
    </recommendedName>
    <domain>
        <recommendedName>
            <fullName>Anthranilate synthase component 2</fullName>
            <shortName>AS</shortName>
            <ecNumber>4.1.3.27</ecNumber>
        </recommendedName>
        <alternativeName>
            <fullName>Anthranilate synthase, glutamine amidotransferase component</fullName>
        </alternativeName>
    </domain>
    <domain>
        <recommendedName>
            <fullName>Indole-3-glycerol phosphate synthase</fullName>
            <shortName>IGPS</shortName>
            <ecNumber>4.1.1.48</ecNumber>
        </recommendedName>
    </domain>
    <domain>
        <recommendedName>
            <fullName>N-(5'-phosphoribosyl)anthranilate isomerase</fullName>
            <shortName>PRAI</shortName>
            <ecNumber>5.3.1.24</ecNumber>
        </recommendedName>
    </domain>
</protein>
<accession>P24773</accession>
<organism>
    <name type="scientific">Penicillium chrysogenum</name>
    <name type="common">Penicillium notatum</name>
    <dbReference type="NCBI Taxonomy" id="5076"/>
    <lineage>
        <taxon>Eukaryota</taxon>
        <taxon>Fungi</taxon>
        <taxon>Dikarya</taxon>
        <taxon>Ascomycota</taxon>
        <taxon>Pezizomycotina</taxon>
        <taxon>Eurotiomycetes</taxon>
        <taxon>Eurotiomycetidae</taxon>
        <taxon>Eurotiales</taxon>
        <taxon>Aspergillaceae</taxon>
        <taxon>Penicillium</taxon>
        <taxon>Penicillium chrysogenum species complex</taxon>
    </lineage>
</organism>
<comment type="function">
    <text>Trifunctional enzyme bearing the Gln amidotransferase (GATase) domain of anthranilate synthase, indole-glycerolphosphate synthase, and phosphoribosylanthranilate isomerase activities.</text>
</comment>
<comment type="catalytic activity">
    <reaction>
        <text>N-(5-phospho-beta-D-ribosyl)anthranilate = 1-(2-carboxyphenylamino)-1-deoxy-D-ribulose 5-phosphate</text>
        <dbReference type="Rhea" id="RHEA:21540"/>
        <dbReference type="ChEBI" id="CHEBI:18277"/>
        <dbReference type="ChEBI" id="CHEBI:58613"/>
        <dbReference type="EC" id="5.3.1.24"/>
    </reaction>
</comment>
<comment type="catalytic activity">
    <reaction>
        <text>1-(2-carboxyphenylamino)-1-deoxy-D-ribulose 5-phosphate + H(+) = (1S,2R)-1-C-(indol-3-yl)glycerol 3-phosphate + CO2 + H2O</text>
        <dbReference type="Rhea" id="RHEA:23476"/>
        <dbReference type="ChEBI" id="CHEBI:15377"/>
        <dbReference type="ChEBI" id="CHEBI:15378"/>
        <dbReference type="ChEBI" id="CHEBI:16526"/>
        <dbReference type="ChEBI" id="CHEBI:58613"/>
        <dbReference type="ChEBI" id="CHEBI:58866"/>
        <dbReference type="EC" id="4.1.1.48"/>
    </reaction>
</comment>
<comment type="catalytic activity">
    <reaction>
        <text>chorismate + L-glutamine = anthranilate + pyruvate + L-glutamate + H(+)</text>
        <dbReference type="Rhea" id="RHEA:21732"/>
        <dbReference type="ChEBI" id="CHEBI:15361"/>
        <dbReference type="ChEBI" id="CHEBI:15378"/>
        <dbReference type="ChEBI" id="CHEBI:16567"/>
        <dbReference type="ChEBI" id="CHEBI:29748"/>
        <dbReference type="ChEBI" id="CHEBI:29985"/>
        <dbReference type="ChEBI" id="CHEBI:58359"/>
        <dbReference type="EC" id="4.1.3.27"/>
    </reaction>
</comment>
<comment type="pathway">
    <text>Amino-acid biosynthesis; L-tryptophan biosynthesis; L-tryptophan from chorismate: step 1/5.</text>
</comment>
<comment type="pathway">
    <text>Amino-acid biosynthesis; L-tryptophan biosynthesis; L-tryptophan from chorismate: step 3/5.</text>
</comment>
<comment type="pathway">
    <text>Amino-acid biosynthesis; L-tryptophan biosynthesis; L-tryptophan from chorismate: step 4/5.</text>
</comment>
<reference key="1">
    <citation type="journal article" date="1987" name="Nucleic Acids Res.">
        <title>The complete nucleotide sequence of the trpC gene from Penicillium chrysogenum.</title>
        <authorList>
            <person name="Penalva M.A."/>
            <person name="Sanchez F."/>
        </authorList>
    </citation>
    <scope>NUCLEOTIDE SEQUENCE [GENOMIC DNA]</scope>
</reference>
<dbReference type="EC" id="4.1.3.27"/>
<dbReference type="EC" id="4.1.1.48"/>
<dbReference type="EC" id="5.3.1.24"/>
<dbReference type="EMBL" id="X05033">
    <property type="protein sequence ID" value="CAA28707.1"/>
    <property type="molecule type" value="Genomic_DNA"/>
</dbReference>
<dbReference type="PIR" id="S30084">
    <property type="entry name" value="S30084"/>
</dbReference>
<dbReference type="SMR" id="P24773"/>
<dbReference type="MEROPS" id="C26.959"/>
<dbReference type="PhylomeDB" id="P24773"/>
<dbReference type="UniPathway" id="UPA00035">
    <property type="reaction ID" value="UER00040"/>
</dbReference>
<dbReference type="UniPathway" id="UPA00035">
    <property type="reaction ID" value="UER00042"/>
</dbReference>
<dbReference type="UniPathway" id="UPA00035">
    <property type="reaction ID" value="UER00043"/>
</dbReference>
<dbReference type="GO" id="GO:0005829">
    <property type="term" value="C:cytosol"/>
    <property type="evidence" value="ECO:0007669"/>
    <property type="project" value="TreeGrafter"/>
</dbReference>
<dbReference type="GO" id="GO:0004049">
    <property type="term" value="F:anthranilate synthase activity"/>
    <property type="evidence" value="ECO:0007669"/>
    <property type="project" value="UniProtKB-EC"/>
</dbReference>
<dbReference type="GO" id="GO:0004425">
    <property type="term" value="F:indole-3-glycerol-phosphate synthase activity"/>
    <property type="evidence" value="ECO:0007669"/>
    <property type="project" value="UniProtKB-EC"/>
</dbReference>
<dbReference type="GO" id="GO:0004640">
    <property type="term" value="F:phosphoribosylanthranilate isomerase activity"/>
    <property type="evidence" value="ECO:0007669"/>
    <property type="project" value="UniProtKB-EC"/>
</dbReference>
<dbReference type="GO" id="GO:0000162">
    <property type="term" value="P:L-tryptophan biosynthetic process"/>
    <property type="evidence" value="ECO:0007669"/>
    <property type="project" value="UniProtKB-UniPathway"/>
</dbReference>
<dbReference type="CDD" id="cd01743">
    <property type="entry name" value="GATase1_Anthranilate_Synthase"/>
    <property type="match status" value="1"/>
</dbReference>
<dbReference type="CDD" id="cd00331">
    <property type="entry name" value="IGPS"/>
    <property type="match status" value="1"/>
</dbReference>
<dbReference type="CDD" id="cd00405">
    <property type="entry name" value="PRAI"/>
    <property type="match status" value="1"/>
</dbReference>
<dbReference type="FunFam" id="3.20.20.70:FF:000136">
    <property type="entry name" value="Multifunctional tryptophan biosynthesis protein"/>
    <property type="match status" value="1"/>
</dbReference>
<dbReference type="FunFam" id="3.40.50.880:FF:000031">
    <property type="entry name" value="Multifunctional tryptophan biosynthesis protein"/>
    <property type="match status" value="1"/>
</dbReference>
<dbReference type="Gene3D" id="3.40.50.880">
    <property type="match status" value="1"/>
</dbReference>
<dbReference type="Gene3D" id="3.20.20.70">
    <property type="entry name" value="Aldolase class I"/>
    <property type="match status" value="2"/>
</dbReference>
<dbReference type="HAMAP" id="MF_00135">
    <property type="entry name" value="PRAI"/>
    <property type="match status" value="1"/>
</dbReference>
<dbReference type="InterPro" id="IPR013785">
    <property type="entry name" value="Aldolase_TIM"/>
</dbReference>
<dbReference type="InterPro" id="IPR050472">
    <property type="entry name" value="Anth_synth/Amidotransfase"/>
</dbReference>
<dbReference type="InterPro" id="IPR016302">
    <property type="entry name" value="Anthranilate_synth_II"/>
</dbReference>
<dbReference type="InterPro" id="IPR029062">
    <property type="entry name" value="Class_I_gatase-like"/>
</dbReference>
<dbReference type="InterPro" id="IPR017926">
    <property type="entry name" value="GATASE"/>
</dbReference>
<dbReference type="InterPro" id="IPR013798">
    <property type="entry name" value="Indole-3-glycerol_P_synth_dom"/>
</dbReference>
<dbReference type="InterPro" id="IPR001468">
    <property type="entry name" value="Indole-3-GlycerolPSynthase_CS"/>
</dbReference>
<dbReference type="InterPro" id="IPR001240">
    <property type="entry name" value="PRAI_dom"/>
</dbReference>
<dbReference type="InterPro" id="IPR011060">
    <property type="entry name" value="RibuloseP-bd_barrel"/>
</dbReference>
<dbReference type="InterPro" id="IPR006221">
    <property type="entry name" value="TrpG/PapA_dom"/>
</dbReference>
<dbReference type="NCBIfam" id="NF001377">
    <property type="entry name" value="PRK00278.2-4"/>
    <property type="match status" value="1"/>
</dbReference>
<dbReference type="NCBIfam" id="TIGR00566">
    <property type="entry name" value="trpG_papA"/>
    <property type="match status" value="1"/>
</dbReference>
<dbReference type="PANTHER" id="PTHR43418:SF4">
    <property type="entry name" value="MULTIFUNCTIONAL TRYPTOPHAN BIOSYNTHESIS PROTEIN"/>
    <property type="match status" value="1"/>
</dbReference>
<dbReference type="PANTHER" id="PTHR43418">
    <property type="entry name" value="MULTIFUNCTIONAL TRYPTOPHAN BIOSYNTHESIS PROTEIN-RELATED"/>
    <property type="match status" value="1"/>
</dbReference>
<dbReference type="Pfam" id="PF00117">
    <property type="entry name" value="GATase"/>
    <property type="match status" value="1"/>
</dbReference>
<dbReference type="Pfam" id="PF00218">
    <property type="entry name" value="IGPS"/>
    <property type="match status" value="1"/>
</dbReference>
<dbReference type="Pfam" id="PF00697">
    <property type="entry name" value="PRAI"/>
    <property type="match status" value="1"/>
</dbReference>
<dbReference type="PIRSF" id="PIRSF001382">
    <property type="entry name" value="TrpG-trpC-trpF"/>
    <property type="match status" value="1"/>
</dbReference>
<dbReference type="PRINTS" id="PR00097">
    <property type="entry name" value="ANTSNTHASEII"/>
</dbReference>
<dbReference type="PRINTS" id="PR00099">
    <property type="entry name" value="CPSGATASE"/>
</dbReference>
<dbReference type="PRINTS" id="PR00096">
    <property type="entry name" value="GATASE"/>
</dbReference>
<dbReference type="SUPFAM" id="SSF52317">
    <property type="entry name" value="Class I glutamine amidotransferase-like"/>
    <property type="match status" value="1"/>
</dbReference>
<dbReference type="SUPFAM" id="SSF51366">
    <property type="entry name" value="Ribulose-phoshate binding barrel"/>
    <property type="match status" value="2"/>
</dbReference>
<dbReference type="PROSITE" id="PS51273">
    <property type="entry name" value="GATASE_TYPE_1"/>
    <property type="match status" value="1"/>
</dbReference>
<dbReference type="PROSITE" id="PS00614">
    <property type="entry name" value="IGPS"/>
    <property type="match status" value="1"/>
</dbReference>
<gene>
    <name type="primary">trpC</name>
</gene>
<keyword id="KW-0028">Amino-acid biosynthesis</keyword>
<keyword id="KW-0057">Aromatic amino acid biosynthesis</keyword>
<keyword id="KW-0210">Decarboxylase</keyword>
<keyword id="KW-0315">Glutamine amidotransferase</keyword>
<keyword id="KW-0413">Isomerase</keyword>
<keyword id="KW-0456">Lyase</keyword>
<keyword id="KW-0511">Multifunctional enzyme</keyword>
<keyword id="KW-0822">Tryptophan biosynthesis</keyword>